<comment type="function">
    <text evidence="1">F(1)F(0) ATP synthase produces ATP from ADP in the presence of a proton or sodium gradient. F-type ATPases consist of two structural domains, F(1) containing the extramembraneous catalytic core and F(0) containing the membrane proton channel, linked together by a central stalk and a peripheral stalk. During catalysis, ATP synthesis in the catalytic domain of F(1) is coupled via a rotary mechanism of the central stalk subunits to proton translocation.</text>
</comment>
<comment type="function">
    <text evidence="1">Component of the F(0) channel, it forms part of the peripheral stalk, linking F(1) to F(0).</text>
</comment>
<comment type="subunit">
    <text evidence="1">F-type ATPases have 2 components, F(1) - the catalytic core - and F(0) - the membrane proton channel. F(1) has five subunits: alpha(3), beta(3), gamma(1), delta(1), epsilon(1). F(0) has three main subunits: a(1), b(2) and c(10-14). The alpha and beta chains form an alternating ring which encloses part of the gamma chain. F(1) is attached to F(0) by a central stalk formed by the gamma and epsilon chains, while a peripheral stalk is formed by the delta and b chains.</text>
</comment>
<comment type="subcellular location">
    <subcellularLocation>
        <location evidence="1">Cell inner membrane</location>
        <topology evidence="1">Single-pass membrane protein</topology>
    </subcellularLocation>
</comment>
<comment type="similarity">
    <text evidence="1">Belongs to the ATPase B chain family.</text>
</comment>
<accession>B2JJK3</accession>
<keyword id="KW-0066">ATP synthesis</keyword>
<keyword id="KW-0997">Cell inner membrane</keyword>
<keyword id="KW-1003">Cell membrane</keyword>
<keyword id="KW-0138">CF(0)</keyword>
<keyword id="KW-0375">Hydrogen ion transport</keyword>
<keyword id="KW-0406">Ion transport</keyword>
<keyword id="KW-0472">Membrane</keyword>
<keyword id="KW-1185">Reference proteome</keyword>
<keyword id="KW-0812">Transmembrane</keyword>
<keyword id="KW-1133">Transmembrane helix</keyword>
<keyword id="KW-0813">Transport</keyword>
<organism>
    <name type="scientific">Paraburkholderia phymatum (strain DSM 17167 / CIP 108236 / LMG 21445 / STM815)</name>
    <name type="common">Burkholderia phymatum</name>
    <dbReference type="NCBI Taxonomy" id="391038"/>
    <lineage>
        <taxon>Bacteria</taxon>
        <taxon>Pseudomonadati</taxon>
        <taxon>Pseudomonadota</taxon>
        <taxon>Betaproteobacteria</taxon>
        <taxon>Burkholderiales</taxon>
        <taxon>Burkholderiaceae</taxon>
        <taxon>Paraburkholderia</taxon>
    </lineage>
</organism>
<dbReference type="EMBL" id="CP001043">
    <property type="protein sequence ID" value="ACC72201.1"/>
    <property type="molecule type" value="Genomic_DNA"/>
</dbReference>
<dbReference type="RefSeq" id="WP_012402379.1">
    <property type="nucleotide sequence ID" value="NC_010622.1"/>
</dbReference>
<dbReference type="SMR" id="B2JJK3"/>
<dbReference type="STRING" id="391038.Bphy_3031"/>
<dbReference type="KEGG" id="bph:Bphy_3031"/>
<dbReference type="eggNOG" id="COG0711">
    <property type="taxonomic scope" value="Bacteria"/>
</dbReference>
<dbReference type="HOGENOM" id="CLU_079215_4_5_4"/>
<dbReference type="OrthoDB" id="9788020at2"/>
<dbReference type="Proteomes" id="UP000001192">
    <property type="component" value="Chromosome 1"/>
</dbReference>
<dbReference type="GO" id="GO:0005886">
    <property type="term" value="C:plasma membrane"/>
    <property type="evidence" value="ECO:0007669"/>
    <property type="project" value="UniProtKB-SubCell"/>
</dbReference>
<dbReference type="GO" id="GO:0045259">
    <property type="term" value="C:proton-transporting ATP synthase complex"/>
    <property type="evidence" value="ECO:0007669"/>
    <property type="project" value="UniProtKB-KW"/>
</dbReference>
<dbReference type="GO" id="GO:0046933">
    <property type="term" value="F:proton-transporting ATP synthase activity, rotational mechanism"/>
    <property type="evidence" value="ECO:0007669"/>
    <property type="project" value="UniProtKB-UniRule"/>
</dbReference>
<dbReference type="GO" id="GO:0046961">
    <property type="term" value="F:proton-transporting ATPase activity, rotational mechanism"/>
    <property type="evidence" value="ECO:0007669"/>
    <property type="project" value="TreeGrafter"/>
</dbReference>
<dbReference type="CDD" id="cd06503">
    <property type="entry name" value="ATP-synt_Fo_b"/>
    <property type="match status" value="1"/>
</dbReference>
<dbReference type="Gene3D" id="6.10.250.1580">
    <property type="match status" value="1"/>
</dbReference>
<dbReference type="HAMAP" id="MF_01398">
    <property type="entry name" value="ATP_synth_b_bprime"/>
    <property type="match status" value="1"/>
</dbReference>
<dbReference type="InterPro" id="IPR028987">
    <property type="entry name" value="ATP_synth_B-like_membr_sf"/>
</dbReference>
<dbReference type="InterPro" id="IPR002146">
    <property type="entry name" value="ATP_synth_b/b'su_bac/chlpt"/>
</dbReference>
<dbReference type="InterPro" id="IPR005864">
    <property type="entry name" value="ATP_synth_F0_bsu_bac"/>
</dbReference>
<dbReference type="InterPro" id="IPR050059">
    <property type="entry name" value="ATP_synthase_B_chain"/>
</dbReference>
<dbReference type="NCBIfam" id="TIGR01144">
    <property type="entry name" value="ATP_synt_b"/>
    <property type="match status" value="1"/>
</dbReference>
<dbReference type="NCBIfam" id="NF004411">
    <property type="entry name" value="PRK05759.1-2"/>
    <property type="match status" value="1"/>
</dbReference>
<dbReference type="PANTHER" id="PTHR33445:SF1">
    <property type="entry name" value="ATP SYNTHASE SUBUNIT B"/>
    <property type="match status" value="1"/>
</dbReference>
<dbReference type="PANTHER" id="PTHR33445">
    <property type="entry name" value="ATP SYNTHASE SUBUNIT B', CHLOROPLASTIC"/>
    <property type="match status" value="1"/>
</dbReference>
<dbReference type="Pfam" id="PF00430">
    <property type="entry name" value="ATP-synt_B"/>
    <property type="match status" value="1"/>
</dbReference>
<dbReference type="SUPFAM" id="SSF81573">
    <property type="entry name" value="F1F0 ATP synthase subunit B, membrane domain"/>
    <property type="match status" value="1"/>
</dbReference>
<feature type="chain" id="PRO_0000368389" description="ATP synthase subunit b">
    <location>
        <begin position="1"/>
        <end position="156"/>
    </location>
</feature>
<feature type="transmembrane region" description="Helical" evidence="1">
    <location>
        <begin position="7"/>
        <end position="27"/>
    </location>
</feature>
<reference key="1">
    <citation type="journal article" date="2014" name="Stand. Genomic Sci.">
        <title>Complete genome sequence of Burkholderia phymatum STM815(T), a broad host range and efficient nitrogen-fixing symbiont of Mimosa species.</title>
        <authorList>
            <person name="Moulin L."/>
            <person name="Klonowska A."/>
            <person name="Caroline B."/>
            <person name="Booth K."/>
            <person name="Vriezen J.A."/>
            <person name="Melkonian R."/>
            <person name="James E.K."/>
            <person name="Young J.P."/>
            <person name="Bena G."/>
            <person name="Hauser L."/>
            <person name="Land M."/>
            <person name="Kyrpides N."/>
            <person name="Bruce D."/>
            <person name="Chain P."/>
            <person name="Copeland A."/>
            <person name="Pitluck S."/>
            <person name="Woyke T."/>
            <person name="Lizotte-Waniewski M."/>
            <person name="Bristow J."/>
            <person name="Riley M."/>
        </authorList>
    </citation>
    <scope>NUCLEOTIDE SEQUENCE [LARGE SCALE GENOMIC DNA]</scope>
    <source>
        <strain>DSM 17167 / CIP 108236 / LMG 21445 / STM815</strain>
    </source>
</reference>
<protein>
    <recommendedName>
        <fullName evidence="1">ATP synthase subunit b</fullName>
    </recommendedName>
    <alternativeName>
        <fullName evidence="1">ATP synthase F(0) sector subunit b</fullName>
    </alternativeName>
    <alternativeName>
        <fullName evidence="1">ATPase subunit I</fullName>
    </alternativeName>
    <alternativeName>
        <fullName evidence="1">F-type ATPase subunit b</fullName>
        <shortName evidence="1">F-ATPase subunit b</shortName>
    </alternativeName>
</protein>
<name>ATPF_PARP8</name>
<proteinExistence type="inferred from homology"/>
<sequence length="156" mass="17092">MNLNATLFAQMVVFLILAWFTMKFVWPPLINALDERSKKIADGLSAAEKGKLELEAAHKRVDQELSQARNEGQQRIADAEKRAVAVADEIKAQAQAEAARIIAQAKADADQQIVKAREALRGEVAALAVKGAEQILKREVDQAAHADLLNQLKAEL</sequence>
<evidence type="ECO:0000255" key="1">
    <source>
        <dbReference type="HAMAP-Rule" id="MF_01398"/>
    </source>
</evidence>
<gene>
    <name evidence="1" type="primary">atpF</name>
    <name type="ordered locus">Bphy_3031</name>
</gene>